<gene>
    <name type="primary">Tfap2b</name>
    <name type="synonym">Tcfap2b</name>
</gene>
<dbReference type="EMBL" id="X78197">
    <property type="protein sequence ID" value="CAA55036.1"/>
    <property type="status" value="ALT_INIT"/>
    <property type="molecule type" value="mRNA"/>
</dbReference>
<dbReference type="EMBL" id="AK017373">
    <property type="protein sequence ID" value="BAB30714.2"/>
    <property type="molecule type" value="mRNA"/>
</dbReference>
<dbReference type="CCDS" id="CCDS14839.1"/>
<dbReference type="PIR" id="S45112">
    <property type="entry name" value="S45112"/>
</dbReference>
<dbReference type="RefSeq" id="NP_033360.2">
    <property type="nucleotide sequence ID" value="NM_009334.4"/>
</dbReference>
<dbReference type="SMR" id="Q61313"/>
<dbReference type="FunCoup" id="Q61313">
    <property type="interactions" value="1549"/>
</dbReference>
<dbReference type="STRING" id="10090.ENSMUSP00000027059"/>
<dbReference type="iPTMnet" id="Q61313"/>
<dbReference type="PhosphoSitePlus" id="Q61313"/>
<dbReference type="PaxDb" id="10090-ENSMUSP00000027059"/>
<dbReference type="ProteomicsDB" id="281894"/>
<dbReference type="Antibodypedia" id="4175">
    <property type="antibodies" value="375 antibodies from 31 providers"/>
</dbReference>
<dbReference type="DNASU" id="21419"/>
<dbReference type="Ensembl" id="ENSMUST00000027059.11">
    <property type="protein sequence ID" value="ENSMUSP00000027059.5"/>
    <property type="gene ID" value="ENSMUSG00000025927.14"/>
</dbReference>
<dbReference type="GeneID" id="21419"/>
<dbReference type="KEGG" id="mmu:21419"/>
<dbReference type="UCSC" id="uc007akr.2">
    <property type="organism name" value="mouse"/>
</dbReference>
<dbReference type="AGR" id="MGI:104672"/>
<dbReference type="CTD" id="7021"/>
<dbReference type="MGI" id="MGI:104672">
    <property type="gene designation" value="Tfap2b"/>
</dbReference>
<dbReference type="VEuPathDB" id="HostDB:ENSMUSG00000025927"/>
<dbReference type="eggNOG" id="KOG3811">
    <property type="taxonomic scope" value="Eukaryota"/>
</dbReference>
<dbReference type="GeneTree" id="ENSGT00950000182848"/>
<dbReference type="InParanoid" id="Q61313"/>
<dbReference type="OMA" id="NNNPNRH"/>
<dbReference type="OrthoDB" id="6252992at2759"/>
<dbReference type="PhylomeDB" id="Q61313"/>
<dbReference type="TreeFam" id="TF313718"/>
<dbReference type="Reactome" id="R-MMU-8866904">
    <property type="pathway name" value="Negative regulation of activity of TFAP2 (AP-2) family transcription factors"/>
</dbReference>
<dbReference type="Reactome" id="R-MMU-8866907">
    <property type="pathway name" value="Activation of the TFAP2 (AP-2) family of transcription factors"/>
</dbReference>
<dbReference type="Reactome" id="R-MMU-9834899">
    <property type="pathway name" value="Specification of the neural plate border"/>
</dbReference>
<dbReference type="BioGRID-ORCS" id="21419">
    <property type="hits" value="1 hit in 77 CRISPR screens"/>
</dbReference>
<dbReference type="PRO" id="PR:Q61313"/>
<dbReference type="Proteomes" id="UP000000589">
    <property type="component" value="Chromosome 1"/>
</dbReference>
<dbReference type="RNAct" id="Q61313">
    <property type="molecule type" value="protein"/>
</dbReference>
<dbReference type="Bgee" id="ENSMUSG00000025927">
    <property type="expression patterns" value="Expressed in preputial swelling and 191 other cell types or tissues"/>
</dbReference>
<dbReference type="ExpressionAtlas" id="Q61313">
    <property type="expression patterns" value="baseline and differential"/>
</dbReference>
<dbReference type="GO" id="GO:0005634">
    <property type="term" value="C:nucleus"/>
    <property type="evidence" value="ECO:0000314"/>
    <property type="project" value="UniProtKB"/>
</dbReference>
<dbReference type="GO" id="GO:0003682">
    <property type="term" value="F:chromatin binding"/>
    <property type="evidence" value="ECO:0007669"/>
    <property type="project" value="Ensembl"/>
</dbReference>
<dbReference type="GO" id="GO:0001228">
    <property type="term" value="F:DNA-binding transcription activator activity, RNA polymerase II-specific"/>
    <property type="evidence" value="ECO:0000314"/>
    <property type="project" value="GO_Central"/>
</dbReference>
<dbReference type="GO" id="GO:0003700">
    <property type="term" value="F:DNA-binding transcription factor activity"/>
    <property type="evidence" value="ECO:0000250"/>
    <property type="project" value="UniProtKB"/>
</dbReference>
<dbReference type="GO" id="GO:0000981">
    <property type="term" value="F:DNA-binding transcription factor activity, RNA polymerase II-specific"/>
    <property type="evidence" value="ECO:0000314"/>
    <property type="project" value="GO_Central"/>
</dbReference>
<dbReference type="GO" id="GO:0046982">
    <property type="term" value="F:protein heterodimerization activity"/>
    <property type="evidence" value="ECO:0007669"/>
    <property type="project" value="Ensembl"/>
</dbReference>
<dbReference type="GO" id="GO:0042803">
    <property type="term" value="F:protein homodimerization activity"/>
    <property type="evidence" value="ECO:0007669"/>
    <property type="project" value="Ensembl"/>
</dbReference>
<dbReference type="GO" id="GO:0000978">
    <property type="term" value="F:RNA polymerase II cis-regulatory region sequence-specific DNA binding"/>
    <property type="evidence" value="ECO:0000314"/>
    <property type="project" value="GO_Central"/>
</dbReference>
<dbReference type="GO" id="GO:0043565">
    <property type="term" value="F:sequence-specific DNA binding"/>
    <property type="evidence" value="ECO:0000250"/>
    <property type="project" value="UniProtKB"/>
</dbReference>
<dbReference type="GO" id="GO:0035909">
    <property type="term" value="P:aorta morphogenesis"/>
    <property type="evidence" value="ECO:0000315"/>
    <property type="project" value="UniProtKB"/>
</dbReference>
<dbReference type="GO" id="GO:0072044">
    <property type="term" value="P:collecting duct development"/>
    <property type="evidence" value="ECO:0000315"/>
    <property type="project" value="UniProtKB"/>
</dbReference>
<dbReference type="GO" id="GO:0072017">
    <property type="term" value="P:distal tubule development"/>
    <property type="evidence" value="ECO:0000315"/>
    <property type="project" value="UniProtKB"/>
</dbReference>
<dbReference type="GO" id="GO:0097070">
    <property type="term" value="P:ductus arteriosus closure"/>
    <property type="evidence" value="ECO:0000315"/>
    <property type="project" value="UniProtKB"/>
</dbReference>
<dbReference type="GO" id="GO:0045444">
    <property type="term" value="P:fat cell differentiation"/>
    <property type="evidence" value="ECO:0000270"/>
    <property type="project" value="UniProtKB"/>
</dbReference>
<dbReference type="GO" id="GO:0035136">
    <property type="term" value="P:forelimb morphogenesis"/>
    <property type="evidence" value="ECO:0000315"/>
    <property type="project" value="UniProtKB"/>
</dbReference>
<dbReference type="GO" id="GO:0010467">
    <property type="term" value="P:gene expression"/>
    <property type="evidence" value="ECO:0000315"/>
    <property type="project" value="MGI"/>
</dbReference>
<dbReference type="GO" id="GO:0006006">
    <property type="term" value="P:glucose metabolic process"/>
    <property type="evidence" value="ECO:0000250"/>
    <property type="project" value="UniProtKB"/>
</dbReference>
<dbReference type="GO" id="GO:0035137">
    <property type="term" value="P:hindlimb morphogenesis"/>
    <property type="evidence" value="ECO:0000315"/>
    <property type="project" value="UniProtKB"/>
</dbReference>
<dbReference type="GO" id="GO:0001822">
    <property type="term" value="P:kidney development"/>
    <property type="evidence" value="ECO:0000315"/>
    <property type="project" value="MGI"/>
</dbReference>
<dbReference type="GO" id="GO:0072210">
    <property type="term" value="P:metanephric nephron development"/>
    <property type="evidence" value="ECO:0000270"/>
    <property type="project" value="UniProtKB"/>
</dbReference>
<dbReference type="GO" id="GO:0043066">
    <property type="term" value="P:negative regulation of apoptotic process"/>
    <property type="evidence" value="ECO:0000315"/>
    <property type="project" value="GO_Central"/>
</dbReference>
<dbReference type="GO" id="GO:0008285">
    <property type="term" value="P:negative regulation of cell population proliferation"/>
    <property type="evidence" value="ECO:0000250"/>
    <property type="project" value="UniProtKB"/>
</dbReference>
<dbReference type="GO" id="GO:0045892">
    <property type="term" value="P:negative regulation of DNA-templated transcription"/>
    <property type="evidence" value="ECO:0000250"/>
    <property type="project" value="UniProtKB"/>
</dbReference>
<dbReference type="GO" id="GO:0043524">
    <property type="term" value="P:negative regulation of neuron apoptotic process"/>
    <property type="evidence" value="ECO:0000316"/>
    <property type="project" value="MGI"/>
</dbReference>
<dbReference type="GO" id="GO:0000122">
    <property type="term" value="P:negative regulation of transcription by RNA polymerase II"/>
    <property type="evidence" value="ECO:0007669"/>
    <property type="project" value="Ensembl"/>
</dbReference>
<dbReference type="GO" id="GO:0051402">
    <property type="term" value="P:neuron apoptotic process"/>
    <property type="evidence" value="ECO:0000316"/>
    <property type="project" value="MGI"/>
</dbReference>
<dbReference type="GO" id="GO:0008284">
    <property type="term" value="P:positive regulation of cell population proliferation"/>
    <property type="evidence" value="ECO:0000315"/>
    <property type="project" value="UniProtKB"/>
</dbReference>
<dbReference type="GO" id="GO:0043525">
    <property type="term" value="P:positive regulation of neuron apoptotic process"/>
    <property type="evidence" value="ECO:0000250"/>
    <property type="project" value="UniProtKB"/>
</dbReference>
<dbReference type="GO" id="GO:0045944">
    <property type="term" value="P:positive regulation of transcription by RNA polymerase II"/>
    <property type="evidence" value="ECO:0000314"/>
    <property type="project" value="MGI"/>
</dbReference>
<dbReference type="GO" id="GO:0030510">
    <property type="term" value="P:regulation of BMP signaling pathway"/>
    <property type="evidence" value="ECO:0000315"/>
    <property type="project" value="UniProtKB"/>
</dbReference>
<dbReference type="GO" id="GO:0045595">
    <property type="term" value="P:regulation of cell differentiation"/>
    <property type="evidence" value="ECO:0000250"/>
    <property type="project" value="UniProtKB"/>
</dbReference>
<dbReference type="GO" id="GO:0050796">
    <property type="term" value="P:regulation of insulin secretion"/>
    <property type="evidence" value="ECO:0000250"/>
    <property type="project" value="UniProtKB"/>
</dbReference>
<dbReference type="GO" id="GO:0006357">
    <property type="term" value="P:regulation of transcription by RNA polymerase II"/>
    <property type="evidence" value="ECO:0000314"/>
    <property type="project" value="GO_Central"/>
</dbReference>
<dbReference type="GO" id="GO:0009410">
    <property type="term" value="P:response to xenobiotic stimulus"/>
    <property type="evidence" value="ECO:0007669"/>
    <property type="project" value="Ensembl"/>
</dbReference>
<dbReference type="GO" id="GO:0010842">
    <property type="term" value="P:retina layer formation"/>
    <property type="evidence" value="ECO:0007669"/>
    <property type="project" value="Ensembl"/>
</dbReference>
<dbReference type="GO" id="GO:0007423">
    <property type="term" value="P:sensory organ development"/>
    <property type="evidence" value="ECO:0000270"/>
    <property type="project" value="UniProtKB"/>
</dbReference>
<dbReference type="GO" id="GO:0043588">
    <property type="term" value="P:skin development"/>
    <property type="evidence" value="ECO:0000270"/>
    <property type="project" value="UniProtKB"/>
</dbReference>
<dbReference type="GO" id="GO:0048745">
    <property type="term" value="P:smooth muscle tissue development"/>
    <property type="evidence" value="ECO:0000315"/>
    <property type="project" value="MGI"/>
</dbReference>
<dbReference type="GO" id="GO:0048485">
    <property type="term" value="P:sympathetic nervous system development"/>
    <property type="evidence" value="ECO:0000316"/>
    <property type="project" value="MGI"/>
</dbReference>
<dbReference type="GO" id="GO:0006366">
    <property type="term" value="P:transcription by RNA polymerase II"/>
    <property type="evidence" value="ECO:0000314"/>
    <property type="project" value="MGI"/>
</dbReference>
<dbReference type="InterPro" id="IPR004979">
    <property type="entry name" value="TF_AP2"/>
</dbReference>
<dbReference type="InterPro" id="IPR008122">
    <property type="entry name" value="TF_AP2_beta"/>
</dbReference>
<dbReference type="InterPro" id="IPR013854">
    <property type="entry name" value="TF_AP2_C"/>
</dbReference>
<dbReference type="PANTHER" id="PTHR10812">
    <property type="entry name" value="TRANSCRIPTION FACTOR AP-2"/>
    <property type="match status" value="1"/>
</dbReference>
<dbReference type="PANTHER" id="PTHR10812:SF14">
    <property type="entry name" value="TRANSCRIPTION FACTOR AP-2-BETA"/>
    <property type="match status" value="1"/>
</dbReference>
<dbReference type="Pfam" id="PF03299">
    <property type="entry name" value="TF_AP-2"/>
    <property type="match status" value="1"/>
</dbReference>
<dbReference type="PRINTS" id="PR01750">
    <property type="entry name" value="AP2BTNSCPFCT"/>
</dbReference>
<dbReference type="PRINTS" id="PR01748">
    <property type="entry name" value="AP2TNSCPFCT"/>
</dbReference>
<protein>
    <recommendedName>
        <fullName>Transcription factor AP-2-beta</fullName>
        <shortName>AP2-beta</shortName>
    </recommendedName>
    <alternativeName>
        <fullName>Activating enhancer-binding protein 2-beta</fullName>
    </alternativeName>
</protein>
<evidence type="ECO:0000250" key="1"/>
<evidence type="ECO:0000250" key="2">
    <source>
        <dbReference type="UniProtKB" id="Q92481"/>
    </source>
</evidence>
<evidence type="ECO:0000256" key="3">
    <source>
        <dbReference type="SAM" id="MobiDB-lite"/>
    </source>
</evidence>
<evidence type="ECO:0000269" key="4">
    <source>
    </source>
</evidence>
<evidence type="ECO:0000305" key="5"/>
<name>AP2B_MOUSE</name>
<comment type="function">
    <text evidence="2">Sequence-specific DNA-binding protein that interacts with inducible viral and cellular enhancer elements to regulate transcription of selected genes. AP-2 factors bind to the consensus sequence 5'-GCCNNNGGC-3' and activate genes involved in a large spectrum of important biological functions including proper eye, face, body wall, limb and neural tube development. They also suppress a number of genes including MCAM/MUC18, C/EBP alpha and MYC. AP-2-beta appears to be required for normal face and limb development and for proper terminal differentiation and function of renal tubular epithelia.</text>
</comment>
<comment type="subunit">
    <text evidence="2">Binds DNA as a dimer. Can form homodimers or heterodimers with other AP-2 family members. Interacts with CITED4. Interacts with UBE2I. Interacts with KCTD1; this interaction represses transcription activation. Interacts with CITED2 (via C-terminus); the interaction stimulates TFAP2B-transcriptional activity (By similarity).</text>
</comment>
<comment type="subcellular location">
    <subcellularLocation>
        <location evidence="4">Nucleus</location>
    </subcellularLocation>
    <text evidence="4">In the brain, localizes to the arcuate hypothalamic nucleus, the ventromedial hypothalamic nucleus and the accumbens nucleus of the ventral striatum.</text>
</comment>
<comment type="tissue specificity">
    <text evidence="4">Localizes to neurons in areas of the cerebral cortex, cerebellum and hypothalamus (at protein level).</text>
</comment>
<comment type="developmental stage">
    <text>Expressed from embryo day 9.5 to birth. In day 13.5 embryo, expressed abundantly in cells coating the neural tube. Expression continues posteriorly in the spinal cord, the dorsal root ganglia, in the prevertebal sympathic ganglia and the ganglion nodosum. High expression found in the dorsal and anteriolateral primordium of the midbrain. Expression also found in skin, kidneys and in many areas of the facial mesenchyme. In adults, expressed in the eye, skin, kidney, prostate, thymus, skeletal muscle and, very weakly in the brain. Highest levels found in kidney.</text>
</comment>
<comment type="induction">
    <text evidence="4">During retinoic acid-mediated differentiation. Up-regulated by starvation and a high fat diet (PubMed:25187989).</text>
</comment>
<comment type="PTM">
    <text evidence="2 4">Sumoylated (PubMed:25187989). Sumoylated on Lys-21; which inhibits transcriptional activity (By similarity).</text>
</comment>
<comment type="similarity">
    <text evidence="5">Belongs to the AP-2 family.</text>
</comment>
<comment type="sequence caution" evidence="5">
    <conflict type="erroneous initiation">
        <sequence resource="EMBL-CDS" id="CAA55036"/>
    </conflict>
</comment>
<proteinExistence type="evidence at protein level"/>
<accession>Q61313</accession>
<accession>Q8CEP1</accession>
<reference key="1">
    <citation type="journal article" date="1995" name="Development">
        <title>Cloning and characterization of a second AP-2 transcription factor: AP-2 beta.</title>
        <authorList>
            <person name="Moser M."/>
            <person name="Imhof A."/>
            <person name="Pscherer A."/>
            <person name="Bauer R."/>
            <person name="Amselgruber W."/>
            <person name="Sinowatz F."/>
            <person name="Schule R."/>
            <person name="Buettner R."/>
        </authorList>
    </citation>
    <scope>NUCLEOTIDE SEQUENCE [MRNA]</scope>
    <source>
        <strain>BALB/cJ</strain>
        <tissue>Embryo</tissue>
    </source>
</reference>
<reference key="2">
    <citation type="journal article" date="2005" name="Science">
        <title>The transcriptional landscape of the mammalian genome.</title>
        <authorList>
            <person name="Carninci P."/>
            <person name="Kasukawa T."/>
            <person name="Katayama S."/>
            <person name="Gough J."/>
            <person name="Frith M.C."/>
            <person name="Maeda N."/>
            <person name="Oyama R."/>
            <person name="Ravasi T."/>
            <person name="Lenhard B."/>
            <person name="Wells C."/>
            <person name="Kodzius R."/>
            <person name="Shimokawa K."/>
            <person name="Bajic V.B."/>
            <person name="Brenner S.E."/>
            <person name="Batalov S."/>
            <person name="Forrest A.R."/>
            <person name="Zavolan M."/>
            <person name="Davis M.J."/>
            <person name="Wilming L.G."/>
            <person name="Aidinis V."/>
            <person name="Allen J.E."/>
            <person name="Ambesi-Impiombato A."/>
            <person name="Apweiler R."/>
            <person name="Aturaliya R.N."/>
            <person name="Bailey T.L."/>
            <person name="Bansal M."/>
            <person name="Baxter L."/>
            <person name="Beisel K.W."/>
            <person name="Bersano T."/>
            <person name="Bono H."/>
            <person name="Chalk A.M."/>
            <person name="Chiu K.P."/>
            <person name="Choudhary V."/>
            <person name="Christoffels A."/>
            <person name="Clutterbuck D.R."/>
            <person name="Crowe M.L."/>
            <person name="Dalla E."/>
            <person name="Dalrymple B.P."/>
            <person name="de Bono B."/>
            <person name="Della Gatta G."/>
            <person name="di Bernardo D."/>
            <person name="Down T."/>
            <person name="Engstrom P."/>
            <person name="Fagiolini M."/>
            <person name="Faulkner G."/>
            <person name="Fletcher C.F."/>
            <person name="Fukushima T."/>
            <person name="Furuno M."/>
            <person name="Futaki S."/>
            <person name="Gariboldi M."/>
            <person name="Georgii-Hemming P."/>
            <person name="Gingeras T.R."/>
            <person name="Gojobori T."/>
            <person name="Green R.E."/>
            <person name="Gustincich S."/>
            <person name="Harbers M."/>
            <person name="Hayashi Y."/>
            <person name="Hensch T.K."/>
            <person name="Hirokawa N."/>
            <person name="Hill D."/>
            <person name="Huminiecki L."/>
            <person name="Iacono M."/>
            <person name="Ikeo K."/>
            <person name="Iwama A."/>
            <person name="Ishikawa T."/>
            <person name="Jakt M."/>
            <person name="Kanapin A."/>
            <person name="Katoh M."/>
            <person name="Kawasawa Y."/>
            <person name="Kelso J."/>
            <person name="Kitamura H."/>
            <person name="Kitano H."/>
            <person name="Kollias G."/>
            <person name="Krishnan S.P."/>
            <person name="Kruger A."/>
            <person name="Kummerfeld S.K."/>
            <person name="Kurochkin I.V."/>
            <person name="Lareau L.F."/>
            <person name="Lazarevic D."/>
            <person name="Lipovich L."/>
            <person name="Liu J."/>
            <person name="Liuni S."/>
            <person name="McWilliam S."/>
            <person name="Madan Babu M."/>
            <person name="Madera M."/>
            <person name="Marchionni L."/>
            <person name="Matsuda H."/>
            <person name="Matsuzawa S."/>
            <person name="Miki H."/>
            <person name="Mignone F."/>
            <person name="Miyake S."/>
            <person name="Morris K."/>
            <person name="Mottagui-Tabar S."/>
            <person name="Mulder N."/>
            <person name="Nakano N."/>
            <person name="Nakauchi H."/>
            <person name="Ng P."/>
            <person name="Nilsson R."/>
            <person name="Nishiguchi S."/>
            <person name="Nishikawa S."/>
            <person name="Nori F."/>
            <person name="Ohara O."/>
            <person name="Okazaki Y."/>
            <person name="Orlando V."/>
            <person name="Pang K.C."/>
            <person name="Pavan W.J."/>
            <person name="Pavesi G."/>
            <person name="Pesole G."/>
            <person name="Petrovsky N."/>
            <person name="Piazza S."/>
            <person name="Reed J."/>
            <person name="Reid J.F."/>
            <person name="Ring B.Z."/>
            <person name="Ringwald M."/>
            <person name="Rost B."/>
            <person name="Ruan Y."/>
            <person name="Salzberg S.L."/>
            <person name="Sandelin A."/>
            <person name="Schneider C."/>
            <person name="Schoenbach C."/>
            <person name="Sekiguchi K."/>
            <person name="Semple C.A."/>
            <person name="Seno S."/>
            <person name="Sessa L."/>
            <person name="Sheng Y."/>
            <person name="Shibata Y."/>
            <person name="Shimada H."/>
            <person name="Shimada K."/>
            <person name="Silva D."/>
            <person name="Sinclair B."/>
            <person name="Sperling S."/>
            <person name="Stupka E."/>
            <person name="Sugiura K."/>
            <person name="Sultana R."/>
            <person name="Takenaka Y."/>
            <person name="Taki K."/>
            <person name="Tammoja K."/>
            <person name="Tan S.L."/>
            <person name="Tang S."/>
            <person name="Taylor M.S."/>
            <person name="Tegner J."/>
            <person name="Teichmann S.A."/>
            <person name="Ueda H.R."/>
            <person name="van Nimwegen E."/>
            <person name="Verardo R."/>
            <person name="Wei C.L."/>
            <person name="Yagi K."/>
            <person name="Yamanishi H."/>
            <person name="Zabarovsky E."/>
            <person name="Zhu S."/>
            <person name="Zimmer A."/>
            <person name="Hide W."/>
            <person name="Bult C."/>
            <person name="Grimmond S.M."/>
            <person name="Teasdale R.D."/>
            <person name="Liu E.T."/>
            <person name="Brusic V."/>
            <person name="Quackenbush J."/>
            <person name="Wahlestedt C."/>
            <person name="Mattick J.S."/>
            <person name="Hume D.A."/>
            <person name="Kai C."/>
            <person name="Sasaki D."/>
            <person name="Tomaru Y."/>
            <person name="Fukuda S."/>
            <person name="Kanamori-Katayama M."/>
            <person name="Suzuki M."/>
            <person name="Aoki J."/>
            <person name="Arakawa T."/>
            <person name="Iida J."/>
            <person name="Imamura K."/>
            <person name="Itoh M."/>
            <person name="Kato T."/>
            <person name="Kawaji H."/>
            <person name="Kawagashira N."/>
            <person name="Kawashima T."/>
            <person name="Kojima M."/>
            <person name="Kondo S."/>
            <person name="Konno H."/>
            <person name="Nakano K."/>
            <person name="Ninomiya N."/>
            <person name="Nishio T."/>
            <person name="Okada M."/>
            <person name="Plessy C."/>
            <person name="Shibata K."/>
            <person name="Shiraki T."/>
            <person name="Suzuki S."/>
            <person name="Tagami M."/>
            <person name="Waki K."/>
            <person name="Watahiki A."/>
            <person name="Okamura-Oho Y."/>
            <person name="Suzuki H."/>
            <person name="Kawai J."/>
            <person name="Hayashizaki Y."/>
        </authorList>
    </citation>
    <scope>NUCLEOTIDE SEQUENCE [LARGE SCALE MRNA]</scope>
    <source>
        <strain>C57BL/6J</strain>
        <tissue>Head</tissue>
    </source>
</reference>
<reference key="3">
    <citation type="journal article" date="2002" name="Genomics">
        <title>Cloning of mouse Cited4, a member of the CITED family p300/CBP-binding transcriptional coactivators: induced expression in mammary epithelial cells.</title>
        <authorList>
            <person name="Yahata T."/>
            <person name="Takedatsu H."/>
            <person name="Dunwoodie S.L."/>
            <person name="Braganca J."/>
            <person name="Swingler T."/>
            <person name="Withington S.L."/>
            <person name="Hur J."/>
            <person name="Coser K.R."/>
            <person name="Isselbacher K.J."/>
            <person name="Bhattacharya S."/>
            <person name="Shioda T."/>
        </authorList>
    </citation>
    <scope>INTERACTION WITH CITED4</scope>
</reference>
<reference key="4">
    <citation type="journal article" date="2014" name="PLoS Genet.">
        <title>Obesity-linked homologues TfAP-2 and Twz establish meal frequency in Drosophila melanogaster.</title>
        <authorList>
            <person name="Williams M.J."/>
            <person name="Goergen P."/>
            <person name="Rajendran J."/>
            <person name="Zheleznyakova G."/>
            <person name="Haegglund M.G."/>
            <person name="Perland E."/>
            <person name="Bagchi S."/>
            <person name="Kalogeropoulou A."/>
            <person name="Khan Z."/>
            <person name="Fredriksson R."/>
            <person name="Schioeth H.B."/>
        </authorList>
    </citation>
    <scope>SUBCELLULAR LOCATION</scope>
    <scope>TISSUE SPECIFICITY</scope>
    <scope>INDUCTION</scope>
    <scope>SUMOYLATION</scope>
</reference>
<feature type="chain" id="PRO_0000184802" description="Transcription factor AP-2-beta">
    <location>
        <begin position="1"/>
        <end position="459"/>
    </location>
</feature>
<feature type="region of interest" description="Disordered" evidence="3">
    <location>
        <begin position="30"/>
        <end position="139"/>
    </location>
</feature>
<feature type="region of interest" description="H-S-H (helix-span-helix), dimerization">
    <location>
        <begin position="299"/>
        <end position="429"/>
    </location>
</feature>
<feature type="region of interest" description="Disordered" evidence="3">
    <location>
        <begin position="435"/>
        <end position="459"/>
    </location>
</feature>
<feature type="compositionally biased region" description="Polar residues" evidence="3">
    <location>
        <begin position="35"/>
        <end position="51"/>
    </location>
</feature>
<feature type="compositionally biased region" description="Low complexity" evidence="3">
    <location>
        <begin position="121"/>
        <end position="132"/>
    </location>
</feature>
<feature type="compositionally biased region" description="Basic and acidic residues" evidence="3">
    <location>
        <begin position="450"/>
        <end position="459"/>
    </location>
</feature>
<feature type="modified residue" description="Phosphoserine; by PKA" evidence="1">
    <location>
        <position position="258"/>
    </location>
</feature>
<feature type="cross-link" description="Glycyl lysine isopeptide (Lys-Gly) (interchain with G-Cter in SUMO)" evidence="1">
    <location>
        <position position="21"/>
    </location>
</feature>
<sequence length="459" mass="50373">MHSPPRDQAAIMLWKLVENVKYEDIYEDRHDGVPSHSSRLSQLGSVSQGPYSSAPPLSHTPSSDFQPPYFPPPYQPLPYHQSQDPYSHVNDPYSLNPLHQPQQHPWGQRQRQEVGSEAGSLLPQPRAALPQLSGLDPRRDYHSVRRPDVLLHSAHHGLDAGMGDSLSLHGLGHPGMEDVQSVEDANNSGMNLLDQSVIKKVPVPPKSVTSLMMNKDGFLGGMSVNTGEVFCSVPGRLSLLSSTSKYKVTVGEVQRRLSPPECLNASLLGGVLRRAKSKNGGRSLRERLEKIGLNLPAGRRKAANVTLLTSLVEGEAVHLARDFGYICETEFPAKAVSEYLNRQHTDPSDLHSRKNMLLATKQLCKEFTDLLAQDRTPIGNSRPSPILEPGIQSCLTHFSLITHGFGAPAICAALTALQNYLTEALKGMDKMFLNNTTNRHTSGEGPGSKTGDKEEKHRK</sequence>
<keyword id="KW-0010">Activator</keyword>
<keyword id="KW-0238">DNA-binding</keyword>
<keyword id="KW-1017">Isopeptide bond</keyword>
<keyword id="KW-0539">Nucleus</keyword>
<keyword id="KW-0597">Phosphoprotein</keyword>
<keyword id="KW-1185">Reference proteome</keyword>
<keyword id="KW-0804">Transcription</keyword>
<keyword id="KW-0805">Transcription regulation</keyword>
<keyword id="KW-0832">Ubl conjugation</keyword>
<organism>
    <name type="scientific">Mus musculus</name>
    <name type="common">Mouse</name>
    <dbReference type="NCBI Taxonomy" id="10090"/>
    <lineage>
        <taxon>Eukaryota</taxon>
        <taxon>Metazoa</taxon>
        <taxon>Chordata</taxon>
        <taxon>Craniata</taxon>
        <taxon>Vertebrata</taxon>
        <taxon>Euteleostomi</taxon>
        <taxon>Mammalia</taxon>
        <taxon>Eutheria</taxon>
        <taxon>Euarchontoglires</taxon>
        <taxon>Glires</taxon>
        <taxon>Rodentia</taxon>
        <taxon>Myomorpha</taxon>
        <taxon>Muroidea</taxon>
        <taxon>Muridae</taxon>
        <taxon>Murinae</taxon>
        <taxon>Mus</taxon>
        <taxon>Mus</taxon>
    </lineage>
</organism>